<comment type="function">
    <text evidence="5">Bifunctional sesterterpenoid synthase that performs both prenyl transferase and terpene cyclase activity, converting isopentenyl diphosphate and dimethylallyl diphosphate into geranylfarnesyl diphosphate (GFPP) and then converting GFPP into the enantiomeric sesterterpenes with a 5-6-7-3-5 ring system fusoxypene A, fusoxypene B, fusoxypene C and (-)-astellatene.</text>
</comment>
<comment type="catalytic activity">
    <reaction evidence="5">
        <text>4 isopentenyl diphosphate + dimethylallyl diphosphate = (2E,6E,10E,14E)-geranylfarnesyl diphosphate + 4 diphosphate</text>
        <dbReference type="Rhea" id="RHEA:66860"/>
        <dbReference type="ChEBI" id="CHEBI:33019"/>
        <dbReference type="ChEBI" id="CHEBI:57623"/>
        <dbReference type="ChEBI" id="CHEBI:57907"/>
        <dbReference type="ChEBI" id="CHEBI:128769"/>
    </reaction>
    <physiologicalReaction direction="left-to-right" evidence="5">
        <dbReference type="Rhea" id="RHEA:66861"/>
    </physiologicalReaction>
</comment>
<comment type="catalytic activity">
    <reaction evidence="5">
        <text>(2E,6E,10E,14E)-geranylfarnesyl diphosphate = fusoxypene A + diphosphate</text>
        <dbReference type="Rhea" id="RHEA:71979"/>
        <dbReference type="ChEBI" id="CHEBI:33019"/>
        <dbReference type="ChEBI" id="CHEBI:57907"/>
        <dbReference type="ChEBI" id="CHEBI:191385"/>
    </reaction>
    <physiologicalReaction direction="left-to-right" evidence="5">
        <dbReference type="Rhea" id="RHEA:71980"/>
    </physiologicalReaction>
</comment>
<comment type="catalytic activity">
    <reaction evidence="5">
        <text>(2E,6E,10E,14E)-geranylfarnesyl diphosphate = fusoxypene B + diphosphate</text>
        <dbReference type="Rhea" id="RHEA:71983"/>
        <dbReference type="ChEBI" id="CHEBI:33019"/>
        <dbReference type="ChEBI" id="CHEBI:57907"/>
        <dbReference type="ChEBI" id="CHEBI:191386"/>
    </reaction>
    <physiologicalReaction direction="left-to-right" evidence="5">
        <dbReference type="Rhea" id="RHEA:71984"/>
    </physiologicalReaction>
</comment>
<comment type="catalytic activity">
    <reaction evidence="5">
        <text>(2E,6E,10E,14E)-geranylfarnesyl diphosphate = fusoxypene C + diphosphate</text>
        <dbReference type="Rhea" id="RHEA:71987"/>
        <dbReference type="ChEBI" id="CHEBI:33019"/>
        <dbReference type="ChEBI" id="CHEBI:57907"/>
        <dbReference type="ChEBI" id="CHEBI:191387"/>
    </reaction>
    <physiologicalReaction direction="left-to-right" evidence="5">
        <dbReference type="Rhea" id="RHEA:71988"/>
    </physiologicalReaction>
</comment>
<comment type="catalytic activity">
    <reaction evidence="5">
        <text>(2E,6E,10E,14E)-geranylfarnesyl diphosphate = (-)-astellatene + diphosphate</text>
        <dbReference type="Rhea" id="RHEA:71991"/>
        <dbReference type="ChEBI" id="CHEBI:33019"/>
        <dbReference type="ChEBI" id="CHEBI:57907"/>
        <dbReference type="ChEBI" id="CHEBI:191388"/>
    </reaction>
    <physiologicalReaction direction="left-to-right" evidence="5">
        <dbReference type="Rhea" id="RHEA:71992"/>
    </physiologicalReaction>
</comment>
<comment type="similarity">
    <text evidence="7">In the N-terminal section; belongs to the terpene synthase family.</text>
</comment>
<comment type="similarity">
    <text evidence="7">In the C-terminal section; belongs to the FPP/GGPP synthase family.</text>
</comment>
<protein>
    <recommendedName>
        <fullName evidence="6">Fusoxypene synthase</fullName>
        <shortName evidence="6">FS</shortName>
    </recommendedName>
    <domain>
        <recommendedName>
            <fullName evidence="6">Sesterterpenoid synthase</fullName>
            <ecNumber evidence="5">4.2.3.-</ecNumber>
        </recommendedName>
    </domain>
    <domain>
        <recommendedName>
            <fullName evidence="6">Geranylfarnesyl diphosphate synthase</fullName>
            <shortName evidence="6">GFDP synthase</shortName>
            <ecNumber evidence="5">2.5.1.-</ecNumber>
        </recommendedName>
        <alternativeName>
            <fullName evidence="6">Bifunctional terpene synthase FoFS</fullName>
            <shortName evidence="6">BFTS FoFS</shortName>
        </alternativeName>
    </domain>
</protein>
<keyword id="KW-0414">Isoprene biosynthesis</keyword>
<keyword id="KW-0456">Lyase</keyword>
<keyword id="KW-0460">Magnesium</keyword>
<keyword id="KW-0479">Metal-binding</keyword>
<keyword id="KW-0511">Multifunctional enzyme</keyword>
<keyword id="KW-0808">Transferase</keyword>
<feature type="chain" id="PRO_0000456427" description="Fusoxypene synthase">
    <location>
        <begin position="1"/>
        <end position="716"/>
    </location>
</feature>
<feature type="region of interest" description="Sesterterpenoid synthase" evidence="2">
    <location>
        <begin position="4"/>
        <end position="328"/>
    </location>
</feature>
<feature type="region of interest" description="Substrate" evidence="1">
    <location>
        <begin position="187"/>
        <end position="190"/>
    </location>
</feature>
<feature type="region of interest" description="Substrate" evidence="1">
    <location>
        <begin position="235"/>
        <end position="239"/>
    </location>
</feature>
<feature type="region of interest" description="Geranylfarnesyl diphosphate synthase" evidence="2">
    <location>
        <begin position="329"/>
        <end position="711"/>
    </location>
</feature>
<feature type="binding site" evidence="4">
    <location>
        <position position="96"/>
    </location>
    <ligand>
        <name>Mg(2+)</name>
        <dbReference type="ChEBI" id="CHEBI:18420"/>
        <label>1</label>
    </ligand>
</feature>
<feature type="binding site" evidence="4">
    <location>
        <position position="96"/>
    </location>
    <ligand>
        <name>Mg(2+)</name>
        <dbReference type="ChEBI" id="CHEBI:18420"/>
        <label>2</label>
    </ligand>
</feature>
<feature type="binding site" evidence="1">
    <location>
        <position position="96"/>
    </location>
    <ligand>
        <name>substrate</name>
    </ligand>
</feature>
<feature type="binding site" evidence="1">
    <location>
        <position position="231"/>
    </location>
    <ligand>
        <name>substrate</name>
    </ligand>
</feature>
<feature type="binding site" evidence="3">
    <location>
        <position position="422"/>
    </location>
    <ligand>
        <name>isopentenyl diphosphate</name>
        <dbReference type="ChEBI" id="CHEBI:128769"/>
    </ligand>
</feature>
<feature type="binding site" evidence="3">
    <location>
        <position position="425"/>
    </location>
    <ligand>
        <name>isopentenyl diphosphate</name>
        <dbReference type="ChEBI" id="CHEBI:128769"/>
    </ligand>
</feature>
<feature type="binding site" evidence="3">
    <location>
        <position position="454"/>
    </location>
    <ligand>
        <name>isopentenyl diphosphate</name>
        <dbReference type="ChEBI" id="CHEBI:128769"/>
    </ligand>
</feature>
<feature type="binding site" evidence="3">
    <location>
        <position position="461"/>
    </location>
    <ligand>
        <name>Mg(2+)</name>
        <dbReference type="ChEBI" id="CHEBI:18420"/>
        <label>3</label>
    </ligand>
</feature>
<feature type="binding site" evidence="3">
    <location>
        <position position="461"/>
    </location>
    <ligand>
        <name>Mg(2+)</name>
        <dbReference type="ChEBI" id="CHEBI:18420"/>
        <label>4</label>
    </ligand>
</feature>
<feature type="binding site" evidence="3">
    <location>
        <position position="465"/>
    </location>
    <ligand>
        <name>Mg(2+)</name>
        <dbReference type="ChEBI" id="CHEBI:18420"/>
        <label>3</label>
    </ligand>
</feature>
<feature type="binding site" evidence="3">
    <location>
        <position position="465"/>
    </location>
    <ligand>
        <name>Mg(2+)</name>
        <dbReference type="ChEBI" id="CHEBI:18420"/>
        <label>4</label>
    </ligand>
</feature>
<feature type="binding site" evidence="3">
    <location>
        <position position="470"/>
    </location>
    <ligand>
        <name>dimethylallyl diphosphate</name>
        <dbReference type="ChEBI" id="CHEBI:57623"/>
    </ligand>
</feature>
<feature type="binding site" evidence="3">
    <location>
        <position position="471"/>
    </location>
    <ligand>
        <name>isopentenyl diphosphate</name>
        <dbReference type="ChEBI" id="CHEBI:128769"/>
    </ligand>
</feature>
<feature type="binding site" evidence="3">
    <location>
        <position position="548"/>
    </location>
    <ligand>
        <name>dimethylallyl diphosphate</name>
        <dbReference type="ChEBI" id="CHEBI:57623"/>
    </ligand>
</feature>
<feature type="binding site" evidence="3">
    <location>
        <position position="549"/>
    </location>
    <ligand>
        <name>dimethylallyl diphosphate</name>
        <dbReference type="ChEBI" id="CHEBI:57623"/>
    </ligand>
</feature>
<feature type="binding site" evidence="3">
    <location>
        <position position="587"/>
    </location>
    <ligand>
        <name>dimethylallyl diphosphate</name>
        <dbReference type="ChEBI" id="CHEBI:57623"/>
    </ligand>
</feature>
<feature type="binding site" evidence="3">
    <location>
        <position position="594"/>
    </location>
    <ligand>
        <name>dimethylallyl diphosphate</name>
        <dbReference type="ChEBI" id="CHEBI:57623"/>
    </ligand>
</feature>
<feature type="binding site" evidence="3">
    <location>
        <position position="602"/>
    </location>
    <ligand>
        <name>dimethylallyl diphosphate</name>
        <dbReference type="ChEBI" id="CHEBI:57623"/>
    </ligand>
</feature>
<sequence>MDQLSYQSRLIPPEEAQQTGCFTSLPIRIHPRNDIADAATAKFIADWAKHVGDGREKRTHFCPSRVGNWNSLLYPEGLPERLGSVSYLLDLGLIHDDVNEELSVQDAMAAHERLRPALDPQDNRKWDPESPQMKFKMLLSECVIECIKTDRELGTAMLKSFRVLWLDIAENATSDAPQTMDDYWDVRMTNGGMSVFWPMVLYATNLRLSEEQHTLVQPIIAAAEEALCWANDYFSYEREVWELETGKAKRIVNIVEMVSRTKGLSSAEAKAEVKRMILGAEAKYCRLRDDLLSSNPEMSMDLKRWIEYIGLSISGNHYWLSACSRQNTWKTNCSIDGKINGLTNGSVNDTNNRSVDGVVNGTVDTGIEEPSTGNKDTSLKALKLLFNSTPNESHPVCRYPNDKLSDYAMVAPMTHISSLPSKGTRSELISALNVWLKVPPVVLGHISSAIDMLHNASLILDDIQDNSPLRRGVPAAHVVFGTAQSINSATFMFVKATEAVRSTLSPAALEALLRGLQTLFMGQSWDLYWKHNLQCPAEGDYIRMVDHKTGGMFVMLVQLMAAESPYYGASVIEDLERLMRLLGRFYQIRDDYMNFSAYSAQKGFAEDLDEGKFSFPVVCGFERDPELRGQILAIFRQRPTSGAGEATQLSRKVKEHLIRCIAASGGFDETLKCLRSLENELDTEIAELEKKLGQVNPLLRLCLATLSMEGCEKICW</sequence>
<name>FOFS_FUSOX</name>
<proteinExistence type="evidence at protein level"/>
<reference key="1">
    <citation type="journal article" date="2021" name="Org. Lett.">
        <title>Genome-based discovery of enantiomeric pentacyclic sesterterpenes catalyzed by fungal bifunctional terpene synthases.</title>
        <authorList>
            <person name="Jiang L."/>
            <person name="Zhang X."/>
            <person name="Sato Y."/>
            <person name="Zhu G."/>
            <person name="Minami A."/>
            <person name="Zhang W."/>
            <person name="Ozaki T."/>
            <person name="Zhu B."/>
            <person name="Wang Z."/>
            <person name="Wang X."/>
            <person name="Lv K."/>
            <person name="Zhang J."/>
            <person name="Wang Y."/>
            <person name="Gao S."/>
            <person name="Liu C."/>
            <person name="Hsiang T."/>
            <person name="Zhang L."/>
            <person name="Oikawa H."/>
            <person name="Liu X."/>
        </authorList>
    </citation>
    <scope>NUCLEOTIDE SEQUENCE [GENOMIC DNA]</scope>
    <scope>FUNCTION</scope>
    <scope>CATALYTIC ACTIVITY</scope>
</reference>
<accession>P9WER6</accession>
<dbReference type="EC" id="4.2.3.-" evidence="5"/>
<dbReference type="EC" id="2.5.1.-" evidence="5"/>
<dbReference type="EMBL" id="MW446505">
    <property type="protein sequence ID" value="UPT51558.1"/>
    <property type="molecule type" value="Genomic_DNA"/>
</dbReference>
<dbReference type="SMR" id="P9WER6"/>
<dbReference type="GO" id="GO:0016829">
    <property type="term" value="F:lyase activity"/>
    <property type="evidence" value="ECO:0007669"/>
    <property type="project" value="UniProtKB-KW"/>
</dbReference>
<dbReference type="GO" id="GO:0046872">
    <property type="term" value="F:metal ion binding"/>
    <property type="evidence" value="ECO:0007669"/>
    <property type="project" value="UniProtKB-KW"/>
</dbReference>
<dbReference type="GO" id="GO:0004659">
    <property type="term" value="F:prenyltransferase activity"/>
    <property type="evidence" value="ECO:0007669"/>
    <property type="project" value="InterPro"/>
</dbReference>
<dbReference type="GO" id="GO:0046165">
    <property type="term" value="P:alcohol biosynthetic process"/>
    <property type="evidence" value="ECO:0007669"/>
    <property type="project" value="UniProtKB-ARBA"/>
</dbReference>
<dbReference type="GO" id="GO:0008299">
    <property type="term" value="P:isoprenoid biosynthetic process"/>
    <property type="evidence" value="ECO:0007669"/>
    <property type="project" value="UniProtKB-KW"/>
</dbReference>
<dbReference type="GO" id="GO:0043386">
    <property type="term" value="P:mycotoxin biosynthetic process"/>
    <property type="evidence" value="ECO:0007669"/>
    <property type="project" value="UniProtKB-ARBA"/>
</dbReference>
<dbReference type="CDD" id="cd00685">
    <property type="entry name" value="Trans_IPPS_HT"/>
    <property type="match status" value="1"/>
</dbReference>
<dbReference type="Gene3D" id="1.10.600.10">
    <property type="entry name" value="Farnesyl Diphosphate Synthase"/>
    <property type="match status" value="2"/>
</dbReference>
<dbReference type="InterPro" id="IPR008949">
    <property type="entry name" value="Isoprenoid_synthase_dom_sf"/>
</dbReference>
<dbReference type="InterPro" id="IPR000092">
    <property type="entry name" value="Polyprenyl_synt"/>
</dbReference>
<dbReference type="InterPro" id="IPR033749">
    <property type="entry name" value="Polyprenyl_synt_CS"/>
</dbReference>
<dbReference type="PANTHER" id="PTHR12001">
    <property type="entry name" value="GERANYLGERANYL PYROPHOSPHATE SYNTHASE"/>
    <property type="match status" value="1"/>
</dbReference>
<dbReference type="PANTHER" id="PTHR12001:SF72">
    <property type="entry name" value="THIJ_PFPI FAMILY PROTEIN (AFU_ORTHOLOGUE AFUA_3G01210)-RELATED"/>
    <property type="match status" value="1"/>
</dbReference>
<dbReference type="Pfam" id="PF00348">
    <property type="entry name" value="polyprenyl_synt"/>
    <property type="match status" value="1"/>
</dbReference>
<dbReference type="Pfam" id="PF19086">
    <property type="entry name" value="Terpene_syn_C_2"/>
    <property type="match status" value="1"/>
</dbReference>
<dbReference type="SFLD" id="SFLDS00005">
    <property type="entry name" value="Isoprenoid_Synthase_Type_I"/>
    <property type="match status" value="1"/>
</dbReference>
<dbReference type="SUPFAM" id="SSF48576">
    <property type="entry name" value="Terpenoid synthases"/>
    <property type="match status" value="2"/>
</dbReference>
<dbReference type="PROSITE" id="PS00723">
    <property type="entry name" value="POLYPRENYL_SYNTHASE_1"/>
    <property type="match status" value="1"/>
</dbReference>
<dbReference type="PROSITE" id="PS00444">
    <property type="entry name" value="POLYPRENYL_SYNTHASE_2"/>
    <property type="match status" value="1"/>
</dbReference>
<organism>
    <name type="scientific">Fusarium oxysporum</name>
    <name type="common">Fusarium vascular wilt</name>
    <dbReference type="NCBI Taxonomy" id="5507"/>
    <lineage>
        <taxon>Eukaryota</taxon>
        <taxon>Fungi</taxon>
        <taxon>Dikarya</taxon>
        <taxon>Ascomycota</taxon>
        <taxon>Pezizomycotina</taxon>
        <taxon>Sordariomycetes</taxon>
        <taxon>Hypocreomycetidae</taxon>
        <taxon>Hypocreales</taxon>
        <taxon>Nectriaceae</taxon>
        <taxon>Fusarium</taxon>
        <taxon>Fusarium oxysporum species complex</taxon>
    </lineage>
</organism>
<evidence type="ECO:0000250" key="1">
    <source>
        <dbReference type="UniProtKB" id="A2PZA5"/>
    </source>
</evidence>
<evidence type="ECO:0000250" key="2">
    <source>
        <dbReference type="UniProtKB" id="C9K2Q3"/>
    </source>
</evidence>
<evidence type="ECO:0000250" key="3">
    <source>
        <dbReference type="UniProtKB" id="Q12051"/>
    </source>
</evidence>
<evidence type="ECO:0000250" key="4">
    <source>
        <dbReference type="UniProtKB" id="Q40577"/>
    </source>
</evidence>
<evidence type="ECO:0000269" key="5">
    <source>
    </source>
</evidence>
<evidence type="ECO:0000303" key="6">
    <source>
    </source>
</evidence>
<evidence type="ECO:0000305" key="7"/>